<dbReference type="EC" id="1.2.1.71" evidence="1"/>
<dbReference type="EMBL" id="AE016853">
    <property type="protein sequence ID" value="AAO55354.1"/>
    <property type="molecule type" value="Genomic_DNA"/>
</dbReference>
<dbReference type="RefSeq" id="NP_791659.1">
    <property type="nucleotide sequence ID" value="NC_004578.1"/>
</dbReference>
<dbReference type="SMR" id="Q885J7"/>
<dbReference type="STRING" id="223283.PSPTO_1835"/>
<dbReference type="KEGG" id="pst:PSPTO_1835"/>
<dbReference type="PATRIC" id="fig|223283.9.peg.1865"/>
<dbReference type="eggNOG" id="COG1012">
    <property type="taxonomic scope" value="Bacteria"/>
</dbReference>
<dbReference type="HOGENOM" id="CLU_005391_1_0_6"/>
<dbReference type="OrthoDB" id="9812625at2"/>
<dbReference type="PhylomeDB" id="Q885J7"/>
<dbReference type="UniPathway" id="UPA00185">
    <property type="reaction ID" value="UER00282"/>
</dbReference>
<dbReference type="Proteomes" id="UP000002515">
    <property type="component" value="Chromosome"/>
</dbReference>
<dbReference type="GO" id="GO:0043824">
    <property type="term" value="F:succinylglutamate-semialdehyde dehydrogenase activity"/>
    <property type="evidence" value="ECO:0007669"/>
    <property type="project" value="UniProtKB-EC"/>
</dbReference>
<dbReference type="GO" id="GO:0019544">
    <property type="term" value="P:arginine catabolic process to glutamate"/>
    <property type="evidence" value="ECO:0007669"/>
    <property type="project" value="UniProtKB-UniRule"/>
</dbReference>
<dbReference type="GO" id="GO:0019545">
    <property type="term" value="P:arginine catabolic process to succinate"/>
    <property type="evidence" value="ECO:0007669"/>
    <property type="project" value="UniProtKB-UniRule"/>
</dbReference>
<dbReference type="CDD" id="cd07095">
    <property type="entry name" value="ALDH_SGSD_AstD"/>
    <property type="match status" value="1"/>
</dbReference>
<dbReference type="FunFam" id="3.40.309.10:FF:000013">
    <property type="entry name" value="N-succinylglutamate 5-semialdehyde dehydrogenase"/>
    <property type="match status" value="1"/>
</dbReference>
<dbReference type="FunFam" id="3.40.605.10:FF:000010">
    <property type="entry name" value="N-succinylglutamate 5-semialdehyde dehydrogenase"/>
    <property type="match status" value="1"/>
</dbReference>
<dbReference type="Gene3D" id="3.40.605.10">
    <property type="entry name" value="Aldehyde Dehydrogenase, Chain A, domain 1"/>
    <property type="match status" value="1"/>
</dbReference>
<dbReference type="Gene3D" id="3.40.309.10">
    <property type="entry name" value="Aldehyde Dehydrogenase, Chain A, domain 2"/>
    <property type="match status" value="1"/>
</dbReference>
<dbReference type="HAMAP" id="MF_01174">
    <property type="entry name" value="Aldedh_AstD"/>
    <property type="match status" value="1"/>
</dbReference>
<dbReference type="InterPro" id="IPR016161">
    <property type="entry name" value="Ald_DH/histidinol_DH"/>
</dbReference>
<dbReference type="InterPro" id="IPR016163">
    <property type="entry name" value="Ald_DH_C"/>
</dbReference>
<dbReference type="InterPro" id="IPR016160">
    <property type="entry name" value="Ald_DH_CS_CYS"/>
</dbReference>
<dbReference type="InterPro" id="IPR029510">
    <property type="entry name" value="Ald_DH_CS_GLU"/>
</dbReference>
<dbReference type="InterPro" id="IPR016162">
    <property type="entry name" value="Ald_DH_N"/>
</dbReference>
<dbReference type="InterPro" id="IPR015590">
    <property type="entry name" value="Aldehyde_DH_dom"/>
</dbReference>
<dbReference type="InterPro" id="IPR017649">
    <property type="entry name" value="SuccinylGlu_semiald_DH_AstD"/>
</dbReference>
<dbReference type="NCBIfam" id="TIGR03240">
    <property type="entry name" value="arg_catab_astD"/>
    <property type="match status" value="1"/>
</dbReference>
<dbReference type="NCBIfam" id="NF006992">
    <property type="entry name" value="PRK09457.1"/>
    <property type="match status" value="1"/>
</dbReference>
<dbReference type="PANTHER" id="PTHR11699">
    <property type="entry name" value="ALDEHYDE DEHYDROGENASE-RELATED"/>
    <property type="match status" value="1"/>
</dbReference>
<dbReference type="Pfam" id="PF00171">
    <property type="entry name" value="Aldedh"/>
    <property type="match status" value="1"/>
</dbReference>
<dbReference type="SUPFAM" id="SSF53720">
    <property type="entry name" value="ALDH-like"/>
    <property type="match status" value="1"/>
</dbReference>
<dbReference type="PROSITE" id="PS00070">
    <property type="entry name" value="ALDEHYDE_DEHYDR_CYS"/>
    <property type="match status" value="1"/>
</dbReference>
<dbReference type="PROSITE" id="PS00687">
    <property type="entry name" value="ALDEHYDE_DEHYDR_GLU"/>
    <property type="match status" value="1"/>
</dbReference>
<protein>
    <recommendedName>
        <fullName evidence="1">N-succinylglutamate 5-semialdehyde dehydrogenase</fullName>
        <ecNumber evidence="1">1.2.1.71</ecNumber>
    </recommendedName>
    <alternativeName>
        <fullName evidence="1">Succinylglutamic semialdehyde dehydrogenase</fullName>
        <shortName evidence="1">SGSD</shortName>
    </alternativeName>
</protein>
<gene>
    <name evidence="1" type="primary">astD</name>
    <name type="ordered locus">PSPTO_1835</name>
</gene>
<proteinExistence type="inferred from homology"/>
<feature type="chain" id="PRO_0000262419" description="N-succinylglutamate 5-semialdehyde dehydrogenase">
    <location>
        <begin position="1"/>
        <end position="488"/>
    </location>
</feature>
<feature type="active site" evidence="1">
    <location>
        <position position="244"/>
    </location>
</feature>
<feature type="active site" evidence="1">
    <location>
        <position position="278"/>
    </location>
</feature>
<feature type="binding site" evidence="1">
    <location>
        <begin position="221"/>
        <end position="226"/>
    </location>
    <ligand>
        <name>NAD(+)</name>
        <dbReference type="ChEBI" id="CHEBI:57540"/>
    </ligand>
</feature>
<sequence>MSTLYIAGAWQAGQGELFHSLNPVTLHVLWSGQGATAEQVDHAVQAARQAFPAWALLSLDQRIAVLDAFAVSLKAHADELANCIGEETGKPLWESATEVTSMVNKIAISVQSYRERTGEKSAPLGDATAVLRHKPHGVVAVFGPYNFPGHLPNGHIVPALLAGNTVLFKPSELTPKVAELTVKCWIEAGLPAGVLNLLQGGRETGIALAANPGIDGLFFTGSSRTGNALHQQFAGRPDKILALEMGGNNPLVVDQVQDIDAAVYTIIQSAFISAGQRCTCARRLLVPEGDWGDALLARLVAVSATLDVGAFDQQPAPFMGSVISLEAARALLDAQRHLLANGAVTLLEMRQPQPGAALLTPGIVDVSAVANRPDVELFGPLLQVVRYAGFDAAIAEANATQYGLAAGLLSDSEARYQQFWLQSRAGIVNWNKQLTGAASSAPFGGVGASGNHRASAYYAADYCAYPVASLETGSLTLPATLTPGVRLS</sequence>
<evidence type="ECO:0000255" key="1">
    <source>
        <dbReference type="HAMAP-Rule" id="MF_01174"/>
    </source>
</evidence>
<reference key="1">
    <citation type="journal article" date="2003" name="Proc. Natl. Acad. Sci. U.S.A.">
        <title>The complete genome sequence of the Arabidopsis and tomato pathogen Pseudomonas syringae pv. tomato DC3000.</title>
        <authorList>
            <person name="Buell C.R."/>
            <person name="Joardar V."/>
            <person name="Lindeberg M."/>
            <person name="Selengut J."/>
            <person name="Paulsen I.T."/>
            <person name="Gwinn M.L."/>
            <person name="Dodson R.J."/>
            <person name="DeBoy R.T."/>
            <person name="Durkin A.S."/>
            <person name="Kolonay J.F."/>
            <person name="Madupu R."/>
            <person name="Daugherty S.C."/>
            <person name="Brinkac L.M."/>
            <person name="Beanan M.J."/>
            <person name="Haft D.H."/>
            <person name="Nelson W.C."/>
            <person name="Davidsen T.M."/>
            <person name="Zafar N."/>
            <person name="Zhou L."/>
            <person name="Liu J."/>
            <person name="Yuan Q."/>
            <person name="Khouri H.M."/>
            <person name="Fedorova N.B."/>
            <person name="Tran B."/>
            <person name="Russell D."/>
            <person name="Berry K.J."/>
            <person name="Utterback T.R."/>
            <person name="Van Aken S.E."/>
            <person name="Feldblyum T.V."/>
            <person name="D'Ascenzo M."/>
            <person name="Deng W.-L."/>
            <person name="Ramos A.R."/>
            <person name="Alfano J.R."/>
            <person name="Cartinhour S."/>
            <person name="Chatterjee A.K."/>
            <person name="Delaney T.P."/>
            <person name="Lazarowitz S.G."/>
            <person name="Martin G.B."/>
            <person name="Schneider D.J."/>
            <person name="Tang X."/>
            <person name="Bender C.L."/>
            <person name="White O."/>
            <person name="Fraser C.M."/>
            <person name="Collmer A."/>
        </authorList>
    </citation>
    <scope>NUCLEOTIDE SEQUENCE [LARGE SCALE GENOMIC DNA]</scope>
    <source>
        <strain>ATCC BAA-871 / DC3000</strain>
    </source>
</reference>
<organism>
    <name type="scientific">Pseudomonas syringae pv. tomato (strain ATCC BAA-871 / DC3000)</name>
    <dbReference type="NCBI Taxonomy" id="223283"/>
    <lineage>
        <taxon>Bacteria</taxon>
        <taxon>Pseudomonadati</taxon>
        <taxon>Pseudomonadota</taxon>
        <taxon>Gammaproteobacteria</taxon>
        <taxon>Pseudomonadales</taxon>
        <taxon>Pseudomonadaceae</taxon>
        <taxon>Pseudomonas</taxon>
    </lineage>
</organism>
<comment type="function">
    <text evidence="1">Catalyzes the NAD-dependent reduction of succinylglutamate semialdehyde into succinylglutamate.</text>
</comment>
<comment type="catalytic activity">
    <reaction evidence="1">
        <text>N-succinyl-L-glutamate 5-semialdehyde + NAD(+) + H2O = N-succinyl-L-glutamate + NADH + 2 H(+)</text>
        <dbReference type="Rhea" id="RHEA:10812"/>
        <dbReference type="ChEBI" id="CHEBI:15377"/>
        <dbReference type="ChEBI" id="CHEBI:15378"/>
        <dbReference type="ChEBI" id="CHEBI:57540"/>
        <dbReference type="ChEBI" id="CHEBI:57945"/>
        <dbReference type="ChEBI" id="CHEBI:58520"/>
        <dbReference type="ChEBI" id="CHEBI:58763"/>
        <dbReference type="EC" id="1.2.1.71"/>
    </reaction>
</comment>
<comment type="pathway">
    <text evidence="1">Amino-acid degradation; L-arginine degradation via AST pathway; L-glutamate and succinate from L-arginine: step 4/5.</text>
</comment>
<comment type="similarity">
    <text evidence="1">Belongs to the aldehyde dehydrogenase family. AstD subfamily.</text>
</comment>
<accession>Q885J7</accession>
<name>ASTD_PSESM</name>
<keyword id="KW-0056">Arginine metabolism</keyword>
<keyword id="KW-0520">NAD</keyword>
<keyword id="KW-0560">Oxidoreductase</keyword>
<keyword id="KW-1185">Reference proteome</keyword>